<organism>
    <name type="scientific">Variovorax paradoxus (strain S110)</name>
    <dbReference type="NCBI Taxonomy" id="543728"/>
    <lineage>
        <taxon>Bacteria</taxon>
        <taxon>Pseudomonadati</taxon>
        <taxon>Pseudomonadota</taxon>
        <taxon>Betaproteobacteria</taxon>
        <taxon>Burkholderiales</taxon>
        <taxon>Comamonadaceae</taxon>
        <taxon>Variovorax</taxon>
    </lineage>
</organism>
<dbReference type="EMBL" id="CP001635">
    <property type="protein sequence ID" value="ACS20647.1"/>
    <property type="molecule type" value="Genomic_DNA"/>
</dbReference>
<dbReference type="SMR" id="C5CWP0"/>
<dbReference type="STRING" id="543728.Vapar_4033"/>
<dbReference type="KEGG" id="vap:Vapar_4033"/>
<dbReference type="eggNOG" id="COG2003">
    <property type="taxonomic scope" value="Bacteria"/>
</dbReference>
<dbReference type="HOGENOM" id="CLU_073529_0_1_4"/>
<dbReference type="OrthoDB" id="9804482at2"/>
<dbReference type="GO" id="GO:0046872">
    <property type="term" value="F:metal ion binding"/>
    <property type="evidence" value="ECO:0007669"/>
    <property type="project" value="UniProtKB-KW"/>
</dbReference>
<dbReference type="GO" id="GO:0008237">
    <property type="term" value="F:metallopeptidase activity"/>
    <property type="evidence" value="ECO:0007669"/>
    <property type="project" value="UniProtKB-KW"/>
</dbReference>
<dbReference type="GO" id="GO:0006508">
    <property type="term" value="P:proteolysis"/>
    <property type="evidence" value="ECO:0007669"/>
    <property type="project" value="UniProtKB-KW"/>
</dbReference>
<dbReference type="CDD" id="cd08071">
    <property type="entry name" value="MPN_DUF2466"/>
    <property type="match status" value="1"/>
</dbReference>
<dbReference type="Gene3D" id="3.40.140.10">
    <property type="entry name" value="Cytidine Deaminase, domain 2"/>
    <property type="match status" value="1"/>
</dbReference>
<dbReference type="InterPro" id="IPR037518">
    <property type="entry name" value="MPN"/>
</dbReference>
<dbReference type="InterPro" id="IPR025657">
    <property type="entry name" value="RadC_JAB"/>
</dbReference>
<dbReference type="InterPro" id="IPR010994">
    <property type="entry name" value="RuvA_2-like"/>
</dbReference>
<dbReference type="InterPro" id="IPR001405">
    <property type="entry name" value="UPF0758"/>
</dbReference>
<dbReference type="InterPro" id="IPR020891">
    <property type="entry name" value="UPF0758_CS"/>
</dbReference>
<dbReference type="InterPro" id="IPR046778">
    <property type="entry name" value="UPF0758_N"/>
</dbReference>
<dbReference type="NCBIfam" id="NF000642">
    <property type="entry name" value="PRK00024.1"/>
    <property type="match status" value="1"/>
</dbReference>
<dbReference type="NCBIfam" id="TIGR00608">
    <property type="entry name" value="radc"/>
    <property type="match status" value="1"/>
</dbReference>
<dbReference type="PANTHER" id="PTHR30471">
    <property type="entry name" value="DNA REPAIR PROTEIN RADC"/>
    <property type="match status" value="1"/>
</dbReference>
<dbReference type="PANTHER" id="PTHR30471:SF3">
    <property type="entry name" value="UPF0758 PROTEIN YEES-RELATED"/>
    <property type="match status" value="1"/>
</dbReference>
<dbReference type="Pfam" id="PF04002">
    <property type="entry name" value="RadC"/>
    <property type="match status" value="1"/>
</dbReference>
<dbReference type="Pfam" id="PF20582">
    <property type="entry name" value="UPF0758_N"/>
    <property type="match status" value="1"/>
</dbReference>
<dbReference type="SUPFAM" id="SSF102712">
    <property type="entry name" value="JAB1/MPN domain"/>
    <property type="match status" value="1"/>
</dbReference>
<dbReference type="SUPFAM" id="SSF47781">
    <property type="entry name" value="RuvA domain 2-like"/>
    <property type="match status" value="1"/>
</dbReference>
<dbReference type="PROSITE" id="PS50249">
    <property type="entry name" value="MPN"/>
    <property type="match status" value="1"/>
</dbReference>
<dbReference type="PROSITE" id="PS01302">
    <property type="entry name" value="UPF0758"/>
    <property type="match status" value="1"/>
</dbReference>
<gene>
    <name type="ordered locus">Vapar_4033</name>
</gene>
<evidence type="ECO:0000255" key="1">
    <source>
        <dbReference type="PROSITE-ProRule" id="PRU01182"/>
    </source>
</evidence>
<evidence type="ECO:0000305" key="2"/>
<reference key="1">
    <citation type="journal article" date="2011" name="J. Bacteriol.">
        <title>Complete genome sequence of the metabolically versatile plant growth-promoting endophyte, Variovorax paradoxus S110.</title>
        <authorList>
            <person name="Han J.I."/>
            <person name="Choi H.K."/>
            <person name="Lee S.W."/>
            <person name="Orwin P.M."/>
            <person name="Kim J."/>
            <person name="Laroe S.L."/>
            <person name="Kim T.G."/>
            <person name="O'Neil J."/>
            <person name="Leadbetter J.R."/>
            <person name="Lee S.Y."/>
            <person name="Hur C.G."/>
            <person name="Spain J.C."/>
            <person name="Ovchinnikova G."/>
            <person name="Goodwin L."/>
            <person name="Han C."/>
        </authorList>
    </citation>
    <scope>NUCLEOTIDE SEQUENCE [LARGE SCALE GENOMIC DNA]</scope>
    <source>
        <strain>S110</strain>
    </source>
</reference>
<keyword id="KW-0378">Hydrolase</keyword>
<keyword id="KW-0479">Metal-binding</keyword>
<keyword id="KW-0482">Metalloprotease</keyword>
<keyword id="KW-0645">Protease</keyword>
<keyword id="KW-0862">Zinc</keyword>
<proteinExistence type="inferred from homology"/>
<comment type="similarity">
    <text evidence="2">Belongs to the UPF0758 family.</text>
</comment>
<feature type="chain" id="PRO_1000201884" description="UPF0758 protein Vapar_4033">
    <location>
        <begin position="1"/>
        <end position="225"/>
    </location>
</feature>
<feature type="domain" description="MPN" evidence="1">
    <location>
        <begin position="103"/>
        <end position="225"/>
    </location>
</feature>
<feature type="short sequence motif" description="JAMM motif" evidence="1">
    <location>
        <begin position="174"/>
        <end position="187"/>
    </location>
</feature>
<feature type="binding site" evidence="1">
    <location>
        <position position="174"/>
    </location>
    <ligand>
        <name>Zn(2+)</name>
        <dbReference type="ChEBI" id="CHEBI:29105"/>
        <note>catalytic</note>
    </ligand>
</feature>
<feature type="binding site" evidence="1">
    <location>
        <position position="176"/>
    </location>
    <ligand>
        <name>Zn(2+)</name>
        <dbReference type="ChEBI" id="CHEBI:29105"/>
        <note>catalytic</note>
    </ligand>
</feature>
<feature type="binding site" evidence="1">
    <location>
        <position position="187"/>
    </location>
    <ligand>
        <name>Zn(2+)</name>
        <dbReference type="ChEBI" id="CHEBI:29105"/>
        <note>catalytic</note>
    </ligand>
</feature>
<protein>
    <recommendedName>
        <fullName>UPF0758 protein Vapar_4033</fullName>
    </recommendedName>
</protein>
<name>Y4033_VARPS</name>
<accession>C5CWP0</accession>
<sequence>MAFKDLPAHARPREKLIARGAAALADAELLALLLRTGVAGKNVLQLAQELLDHFGGLSGLLQTSAEDLKVIKGMGGDAKRAELIAVLELARRAMAERLKERTVFDSPGTVKQYLQLHIGSRPYEVFAVLFLDAQHRLIVLEELFRGTLTQTSVYPREVVTRALHHQAAAVVLSHNHPSGSIEPSRADESLTQTLRAALSLIDVRVLDHVIVSAGQSYSMAEKGLL</sequence>